<organism>
    <name type="scientific">Danio rerio</name>
    <name type="common">Zebrafish</name>
    <name type="synonym">Brachydanio rerio</name>
    <dbReference type="NCBI Taxonomy" id="7955"/>
    <lineage>
        <taxon>Eukaryota</taxon>
        <taxon>Metazoa</taxon>
        <taxon>Chordata</taxon>
        <taxon>Craniata</taxon>
        <taxon>Vertebrata</taxon>
        <taxon>Euteleostomi</taxon>
        <taxon>Actinopterygii</taxon>
        <taxon>Neopterygii</taxon>
        <taxon>Teleostei</taxon>
        <taxon>Ostariophysi</taxon>
        <taxon>Cypriniformes</taxon>
        <taxon>Danionidae</taxon>
        <taxon>Danioninae</taxon>
        <taxon>Danio</taxon>
    </lineage>
</organism>
<evidence type="ECO:0000250" key="1"/>
<evidence type="ECO:0000250" key="2">
    <source>
        <dbReference type="UniProtKB" id="Q9UBF8"/>
    </source>
</evidence>
<evidence type="ECO:0000255" key="3">
    <source>
        <dbReference type="PROSITE-ProRule" id="PRU00269"/>
    </source>
</evidence>
<evidence type="ECO:0000255" key="4">
    <source>
        <dbReference type="PROSITE-ProRule" id="PRU00878"/>
    </source>
</evidence>
<evidence type="ECO:0000256" key="5">
    <source>
        <dbReference type="SAM" id="MobiDB-lite"/>
    </source>
</evidence>
<evidence type="ECO:0000269" key="6">
    <source>
    </source>
</evidence>
<evidence type="ECO:0000305" key="7"/>
<protein>
    <recommendedName>
        <fullName>Phosphatidylinositol 4-kinase beta</fullName>
        <shortName>PI4K-beta</shortName>
        <shortName>PI4Kbeta</shortName>
        <shortName>PtdIns 4-kinase beta</shortName>
        <ecNumber evidence="2">2.7.1.67</ecNumber>
    </recommendedName>
</protein>
<comment type="function">
    <text evidence="2 6">Phosphorylates phosphatidylinositol (PI) in the first committed step in the production of the second messenger inositol-1,4,5,-trisphosphate (PIP). May play an important role the in inner ear development (PubMed:33358777).</text>
</comment>
<comment type="catalytic activity">
    <reaction evidence="2">
        <text>a 1,2-diacyl-sn-glycero-3-phospho-(1D-myo-inositol) + ATP = a 1,2-diacyl-sn-glycero-3-phospho-(1D-myo-inositol 4-phosphate) + ADP + H(+)</text>
        <dbReference type="Rhea" id="RHEA:19877"/>
        <dbReference type="ChEBI" id="CHEBI:15378"/>
        <dbReference type="ChEBI" id="CHEBI:30616"/>
        <dbReference type="ChEBI" id="CHEBI:57880"/>
        <dbReference type="ChEBI" id="CHEBI:58178"/>
        <dbReference type="ChEBI" id="CHEBI:456216"/>
        <dbReference type="EC" id="2.7.1.67"/>
    </reaction>
    <physiologicalReaction direction="left-to-right" evidence="2">
        <dbReference type="Rhea" id="RHEA:19878"/>
    </physiologicalReaction>
</comment>
<comment type="cofactor">
    <cofactor evidence="2">
        <name>Mg(2+)</name>
        <dbReference type="ChEBI" id="CHEBI:18420"/>
    </cofactor>
    <cofactor evidence="2">
        <name>Mn(2+)</name>
        <dbReference type="ChEBI" id="CHEBI:29035"/>
    </cofactor>
</comment>
<comment type="subcellular location">
    <subcellularLocation>
        <location evidence="1">Endomembrane system</location>
    </subcellularLocation>
    <subcellularLocation>
        <location evidence="1">Mitochondrion outer membrane</location>
        <topology evidence="1">Peripheral membrane protein</topology>
    </subcellularLocation>
    <subcellularLocation>
        <location evidence="1">Rough endoplasmic reticulum membrane</location>
        <topology evidence="1">Peripheral membrane protein</topology>
    </subcellularLocation>
</comment>
<comment type="tissue specificity">
    <text evidence="6">Expressed in the inner ear otic vesicles.</text>
</comment>
<comment type="developmental stage">
    <text evidence="6">Expressed as early as 26 hours post-fertilization.</text>
</comment>
<comment type="disruption phenotype">
    <text evidence="6">Knockdown of the gene causes inner ear abnormalities and audiosensory impairment. The semicircular canals of the morphant inner ear are unable to form the characteristic cruciform pattern, resulting in a lack of canal outgrowths and failure of the pillar to properly fuse. In addition the otic vesicles are smaller in the morphants than in wild-type larvae. The morphants also show reduced hearing ability, lacking the brisk startle response observed in wild-type animals at 4 days post-fertilization.</text>
</comment>
<comment type="similarity">
    <text evidence="7">Belongs to the PI3/PI4-kinase family. Type III PI4K subfamily.</text>
</comment>
<comment type="sequence caution" evidence="7">
    <conflict type="miscellaneous discrepancy">
        <sequence resource="EMBL-CDS" id="ACH92118"/>
    </conflict>
    <text>Intron retention.</text>
</comment>
<sequence length="835" mass="94059">MGDTELELSPTHLEELQKSPSTSTTSSLSLPSSPSSGPHPLTSSSPSTSEGLPTSSPPLDVISEGLGELSLVIDTEVAKKACQEVLQKVKFLKGDGEVSSASSEPILANGTAHPEANDGGQPPKISEEEVEPIKSVRRRQKNNSSKQSWLLRLFESKLFDISMAISYLYNSKEPGVQAYIGNRLFSFRNEDVDFYLPQLLNMYIHMDEDVGDAIKPYVVYRCRQSINFSLQCAWLLGAYSSDMHISTQRHSRGTKLRKLILSDELKPSSQRIRREVPQPPPPYPPPLHHGPGMSEHSLSPSKRTHQRSKSDATVSISLSSNLKRTASNPKVETSQDEPVRLTPQREFIKSLMGIGKRLATLPTKEQKTQRLISELSLLNHKLPARVWLPTAAFDHHVVRVPHTQAVVLNSKDKAPYLIYVEVLECENFETSSVPVRIPETQIRSTRSVENLPDCGITPDQRASSFSTVPNYDNDDEAWSVDDIGELQVELPEIHTNSCDNISQFSVDSITSQESKEPIFIAAGDIRRRLSEQLAHTPTTFRKDPEDPSAVALKEPWQEKVRRIREGSPYGHLPNWRLLSVIVKCGDDLRQELLAYQVLKQLQIIWEQERVPLWIKPYKILVISSDSGMIEPVVNAVSIHQVKKQSQLLLLDYFRQEHGNFNTEEFLTAQRNFVQSCAGYCLICYLLQVKDRHNGNILLDSEGHIIHIDFGFILSSSPRNLGFETSAFKLTSEFVDVMGGLDGDMFNYYKMLMLQGLIAARKHMEKVIQIVEIMQQGSQLPCFHGSSTIRNLKERFHMNLTEEQLQVLVEQMVDGSMRSITTKLYDGFQYLTNGIM</sequence>
<gene>
    <name type="primary">pi4kb</name>
    <name type="synonym">pik4cb</name>
</gene>
<feature type="chain" id="PRO_0000365169" description="Phosphatidylinositol 4-kinase beta">
    <location>
        <begin position="1"/>
        <end position="835"/>
    </location>
</feature>
<feature type="domain" description="PIK helical" evidence="4">
    <location>
        <begin position="59"/>
        <end position="262"/>
    </location>
</feature>
<feature type="domain" description="PI3K/PI4K catalytic" evidence="3">
    <location>
        <begin position="554"/>
        <end position="820"/>
    </location>
</feature>
<feature type="region of interest" description="Disordered" evidence="5">
    <location>
        <begin position="1"/>
        <end position="61"/>
    </location>
</feature>
<feature type="region of interest" description="Disordered" evidence="5">
    <location>
        <begin position="99"/>
        <end position="139"/>
    </location>
</feature>
<feature type="region of interest" description="Disordered" evidence="5">
    <location>
        <begin position="267"/>
        <end position="341"/>
    </location>
</feature>
<feature type="region of interest" description="G-loop" evidence="3">
    <location>
        <begin position="560"/>
        <end position="566"/>
    </location>
</feature>
<feature type="region of interest" description="Catalytic loop" evidence="3">
    <location>
        <begin position="687"/>
        <end position="695"/>
    </location>
</feature>
<feature type="region of interest" description="Activation loop" evidence="3">
    <location>
        <begin position="706"/>
        <end position="730"/>
    </location>
</feature>
<feature type="compositionally biased region" description="Low complexity" evidence="5">
    <location>
        <begin position="19"/>
        <end position="59"/>
    </location>
</feature>
<feature type="compositionally biased region" description="Basic and acidic residues" evidence="5">
    <location>
        <begin position="125"/>
        <end position="134"/>
    </location>
</feature>
<feature type="compositionally biased region" description="Basic and acidic residues" evidence="5">
    <location>
        <begin position="267"/>
        <end position="276"/>
    </location>
</feature>
<feature type="compositionally biased region" description="Pro residues" evidence="5">
    <location>
        <begin position="277"/>
        <end position="288"/>
    </location>
</feature>
<feature type="compositionally biased region" description="Polar residues" evidence="5">
    <location>
        <begin position="311"/>
        <end position="332"/>
    </location>
</feature>
<feature type="sequence conflict" description="In Ref. 1; AAY16568." evidence="7" ref="1">
    <original>S</original>
    <variation>L</variation>
    <location>
        <position position="100"/>
    </location>
</feature>
<feature type="sequence conflict" description="In Ref. 3; AAI24585." evidence="7" ref="3">
    <original>R</original>
    <variation>G</variation>
    <location>
        <position position="370"/>
    </location>
</feature>
<keyword id="KW-0067">ATP-binding</keyword>
<keyword id="KW-0256">Endoplasmic reticulum</keyword>
<keyword id="KW-0418">Kinase</keyword>
<keyword id="KW-0443">Lipid metabolism</keyword>
<keyword id="KW-0472">Membrane</keyword>
<keyword id="KW-0496">Mitochondrion</keyword>
<keyword id="KW-1000">Mitochondrion outer membrane</keyword>
<keyword id="KW-0547">Nucleotide-binding</keyword>
<keyword id="KW-1185">Reference proteome</keyword>
<keyword id="KW-0808">Transferase</keyword>
<reference key="1">
    <citation type="submission" date="2005-02" db="EMBL/GenBank/DDBJ databases">
        <title>Phosphatidylinositol 4-kinases of Danio rerio.</title>
        <authorList>
            <person name="Ma H."/>
            <person name="Balla T."/>
        </authorList>
    </citation>
    <scope>NUCLEOTIDE SEQUENCE [MRNA]</scope>
</reference>
<reference key="2">
    <citation type="submission" date="2008-08" db="EMBL/GenBank/DDBJ databases">
        <title>Proteomic analysis of NCS-1 interacting proteins reveals novel signaling pathways required for inner ear development in zebrafish.</title>
        <authorList>
            <person name="Petko J."/>
            <person name="Kabbani N."/>
            <person name="Woll M."/>
            <person name="Decotiis D."/>
            <person name="Frey C."/>
            <person name="Hickey K."/>
            <person name="Craig M."/>
            <person name="Canfield V."/>
            <person name="Levenson R."/>
        </authorList>
    </citation>
    <scope>NUCLEOTIDE SEQUENCE [MRNA]</scope>
</reference>
<reference key="3">
    <citation type="submission" date="2006-10" db="EMBL/GenBank/DDBJ databases">
        <authorList>
            <consortium name="NIH - Zebrafish Gene Collection (ZGC) project"/>
        </authorList>
    </citation>
    <scope>NUCLEOTIDE SEQUENCE [LARGE SCALE MRNA]</scope>
</reference>
<reference key="4">
    <citation type="journal article" date="2020" name="J. Genet. Genomics">
        <title>Phosphatidylinositol 4-kinase beta mutations cause nonsyndromic sensorineural deafness and inner ear malformation.</title>
        <authorList>
            <person name="Su X."/>
            <person name="Feng Y."/>
            <person name="Rahman S.A."/>
            <person name="Wu S."/>
            <person name="Li G."/>
            <person name="Rueschendorf F."/>
            <person name="Zhao L."/>
            <person name="Cui H."/>
            <person name="Liang J."/>
            <person name="Fang L."/>
            <person name="Hu H."/>
            <person name="Froehler S."/>
            <person name="Yu Y."/>
            <person name="Patone G."/>
            <person name="Hummel O."/>
            <person name="Chen Q."/>
            <person name="Raile K."/>
            <person name="Luft F.C."/>
            <person name="Baehring S."/>
            <person name="Hussain K."/>
            <person name="Chen W."/>
            <person name="Zhang J."/>
            <person name="Gong M."/>
        </authorList>
    </citation>
    <scope>DISRUPTION PHENOTYPE</scope>
    <scope>DEVELOPMENTAL STAGE</scope>
    <scope>TISSUE SPECIFICITY</scope>
    <scope>FUNCTION</scope>
</reference>
<name>PI4KB_DANRE</name>
<proteinExistence type="evidence at transcript level"/>
<accession>Q49GP3</accession>
<accession>B5TXD8</accession>
<accession>Q08BS7</accession>
<dbReference type="EC" id="2.7.1.67" evidence="2"/>
<dbReference type="EMBL" id="AY929293">
    <property type="protein sequence ID" value="AAY16568.1"/>
    <property type="molecule type" value="mRNA"/>
</dbReference>
<dbReference type="EMBL" id="FJ032032">
    <property type="protein sequence ID" value="ACH92118.1"/>
    <property type="status" value="ALT_SEQ"/>
    <property type="molecule type" value="mRNA"/>
</dbReference>
<dbReference type="EMBL" id="BC124584">
    <property type="protein sequence ID" value="AAI24585.1"/>
    <property type="molecule type" value="mRNA"/>
</dbReference>
<dbReference type="RefSeq" id="NP_001030149.2">
    <property type="nucleotide sequence ID" value="NM_001034977.2"/>
</dbReference>
<dbReference type="SMR" id="Q49GP3"/>
<dbReference type="FunCoup" id="Q49GP3">
    <property type="interactions" value="2642"/>
</dbReference>
<dbReference type="STRING" id="7955.ENSDARP00000058665"/>
<dbReference type="PaxDb" id="7955-ENSDARP00000099330"/>
<dbReference type="Ensembl" id="ENSDART00000058666">
    <property type="protein sequence ID" value="ENSDARP00000058665"/>
    <property type="gene ID" value="ENSDARG00000040111"/>
</dbReference>
<dbReference type="Ensembl" id="ENSDART00000160332">
    <property type="protein sequence ID" value="ENSDARP00000130423"/>
    <property type="gene ID" value="ENSDARG00000040111"/>
</dbReference>
<dbReference type="Ensembl" id="ENSDART00000182202">
    <property type="protein sequence ID" value="ENSDARP00000149614"/>
    <property type="gene ID" value="ENSDARG00000111175"/>
</dbReference>
<dbReference type="GeneID" id="563201"/>
<dbReference type="KEGG" id="dre:563201"/>
<dbReference type="AGR" id="ZFIN:ZDB-GENE-061013-96"/>
<dbReference type="CTD" id="5298"/>
<dbReference type="ZFIN" id="ZDB-GENE-061013-96">
    <property type="gene designation" value="pi4kb"/>
</dbReference>
<dbReference type="eggNOG" id="KOG0903">
    <property type="taxonomic scope" value="Eukaryota"/>
</dbReference>
<dbReference type="HOGENOM" id="CLU_002446_6_0_1"/>
<dbReference type="InParanoid" id="Q49GP3"/>
<dbReference type="OrthoDB" id="10264149at2759"/>
<dbReference type="PhylomeDB" id="Q49GP3"/>
<dbReference type="TreeFam" id="TF102042"/>
<dbReference type="Reactome" id="R-DRE-1660514">
    <property type="pathway name" value="Synthesis of PIPs at the Golgi membrane"/>
</dbReference>
<dbReference type="PRO" id="PR:Q49GP3"/>
<dbReference type="Proteomes" id="UP000000437">
    <property type="component" value="Alternate scaffold 16"/>
</dbReference>
<dbReference type="Proteomes" id="UP000000437">
    <property type="component" value="Chromosome 16"/>
</dbReference>
<dbReference type="Bgee" id="ENSDARG00000040111">
    <property type="expression patterns" value="Expressed in gastrula and 25 other cell types or tissues"/>
</dbReference>
<dbReference type="ExpressionAtlas" id="Q49GP3">
    <property type="expression patterns" value="baseline and differential"/>
</dbReference>
<dbReference type="GO" id="GO:0005737">
    <property type="term" value="C:cytoplasm"/>
    <property type="evidence" value="ECO:0000318"/>
    <property type="project" value="GO_Central"/>
</dbReference>
<dbReference type="GO" id="GO:0016020">
    <property type="term" value="C:membrane"/>
    <property type="evidence" value="ECO:0000318"/>
    <property type="project" value="GO_Central"/>
</dbReference>
<dbReference type="GO" id="GO:0005741">
    <property type="term" value="C:mitochondrial outer membrane"/>
    <property type="evidence" value="ECO:0007669"/>
    <property type="project" value="UniProtKB-SubCell"/>
</dbReference>
<dbReference type="GO" id="GO:0030867">
    <property type="term" value="C:rough endoplasmic reticulum membrane"/>
    <property type="evidence" value="ECO:0007669"/>
    <property type="project" value="UniProtKB-SubCell"/>
</dbReference>
<dbReference type="GO" id="GO:0004430">
    <property type="term" value="F:1-phosphatidylinositol 4-kinase activity"/>
    <property type="evidence" value="ECO:0000250"/>
    <property type="project" value="UniProtKB"/>
</dbReference>
<dbReference type="GO" id="GO:0005524">
    <property type="term" value="F:ATP binding"/>
    <property type="evidence" value="ECO:0007669"/>
    <property type="project" value="UniProtKB-KW"/>
</dbReference>
<dbReference type="GO" id="GO:0060271">
    <property type="term" value="P:cilium assembly"/>
    <property type="evidence" value="ECO:0000315"/>
    <property type="project" value="ZFIN"/>
</dbReference>
<dbReference type="GO" id="GO:0044782">
    <property type="term" value="P:cilium organization"/>
    <property type="evidence" value="ECO:0000315"/>
    <property type="project" value="ZFIN"/>
</dbReference>
<dbReference type="GO" id="GO:0048839">
    <property type="term" value="P:inner ear development"/>
    <property type="evidence" value="ECO:0000250"/>
    <property type="project" value="UniProtKB"/>
</dbReference>
<dbReference type="GO" id="GO:0042472">
    <property type="term" value="P:inner ear morphogenesis"/>
    <property type="evidence" value="ECO:0000315"/>
    <property type="project" value="ZFIN"/>
</dbReference>
<dbReference type="GO" id="GO:0060119">
    <property type="term" value="P:inner ear receptor cell development"/>
    <property type="evidence" value="ECO:0000315"/>
    <property type="project" value="ZFIN"/>
</dbReference>
<dbReference type="GO" id="GO:0046854">
    <property type="term" value="P:phosphatidylinositol phosphate biosynthetic process"/>
    <property type="evidence" value="ECO:0000318"/>
    <property type="project" value="GO_Central"/>
</dbReference>
<dbReference type="GO" id="GO:0048015">
    <property type="term" value="P:phosphatidylinositol-mediated signaling"/>
    <property type="evidence" value="ECO:0000318"/>
    <property type="project" value="GO_Central"/>
</dbReference>
<dbReference type="GO" id="GO:0072118">
    <property type="term" value="P:pronephros structural organization"/>
    <property type="evidence" value="ECO:0000315"/>
    <property type="project" value="ZFIN"/>
</dbReference>
<dbReference type="GO" id="GO:0060872">
    <property type="term" value="P:semicircular canal development"/>
    <property type="evidence" value="ECO:0000315"/>
    <property type="project" value="ZFIN"/>
</dbReference>
<dbReference type="CDD" id="cd05168">
    <property type="entry name" value="PI4Kc_III_beta"/>
    <property type="match status" value="1"/>
</dbReference>
<dbReference type="FunFam" id="3.30.1010.10:FF:000031">
    <property type="entry name" value="Phosphatidylinositol 4-kinase beta"/>
    <property type="match status" value="1"/>
</dbReference>
<dbReference type="FunFam" id="1.10.1070.11:FF:000004">
    <property type="entry name" value="Phosphatidylinositol 4-kinase, catalytic, beta"/>
    <property type="match status" value="1"/>
</dbReference>
<dbReference type="Gene3D" id="1.10.1070.11">
    <property type="entry name" value="Phosphatidylinositol 3-/4-kinase, catalytic domain"/>
    <property type="match status" value="1"/>
</dbReference>
<dbReference type="Gene3D" id="3.30.1010.10">
    <property type="entry name" value="Phosphatidylinositol 3-kinase Catalytic Subunit, Chain A, domain 4"/>
    <property type="match status" value="1"/>
</dbReference>
<dbReference type="InterPro" id="IPR011009">
    <property type="entry name" value="Kinase-like_dom_sf"/>
</dbReference>
<dbReference type="InterPro" id="IPR000403">
    <property type="entry name" value="PI3/4_kinase_cat_dom"/>
</dbReference>
<dbReference type="InterPro" id="IPR036940">
    <property type="entry name" value="PI3/4_kinase_cat_sf"/>
</dbReference>
<dbReference type="InterPro" id="IPR018936">
    <property type="entry name" value="PI3/4_kinase_CS"/>
</dbReference>
<dbReference type="InterPro" id="IPR001263">
    <property type="entry name" value="PI3K_accessory_dom"/>
</dbReference>
<dbReference type="InterPro" id="IPR049160">
    <property type="entry name" value="PI4KB-PIK1_PIK"/>
</dbReference>
<dbReference type="InterPro" id="IPR015433">
    <property type="entry name" value="PI_Kinase"/>
</dbReference>
<dbReference type="PANTHER" id="PTHR10048:SF22">
    <property type="entry name" value="PHOSPHATIDYLINOSITOL 4-KINASE BETA"/>
    <property type="match status" value="1"/>
</dbReference>
<dbReference type="PANTHER" id="PTHR10048">
    <property type="entry name" value="PHOSPHATIDYLINOSITOL KINASE"/>
    <property type="match status" value="1"/>
</dbReference>
<dbReference type="Pfam" id="PF00454">
    <property type="entry name" value="PI3_PI4_kinase"/>
    <property type="match status" value="1"/>
</dbReference>
<dbReference type="Pfam" id="PF21245">
    <property type="entry name" value="PI4KB-PIK1_PIK"/>
    <property type="match status" value="1"/>
</dbReference>
<dbReference type="SMART" id="SM00146">
    <property type="entry name" value="PI3Kc"/>
    <property type="match status" value="1"/>
</dbReference>
<dbReference type="SUPFAM" id="SSF56112">
    <property type="entry name" value="Protein kinase-like (PK-like)"/>
    <property type="match status" value="1"/>
</dbReference>
<dbReference type="PROSITE" id="PS00915">
    <property type="entry name" value="PI3_4_KINASE_1"/>
    <property type="match status" value="1"/>
</dbReference>
<dbReference type="PROSITE" id="PS00916">
    <property type="entry name" value="PI3_4_KINASE_2"/>
    <property type="match status" value="1"/>
</dbReference>
<dbReference type="PROSITE" id="PS50290">
    <property type="entry name" value="PI3_4_KINASE_3"/>
    <property type="match status" value="1"/>
</dbReference>
<dbReference type="PROSITE" id="PS51545">
    <property type="entry name" value="PIK_HELICAL"/>
    <property type="match status" value="1"/>
</dbReference>